<gene>
    <name evidence="1" type="primary">ccmA1</name>
    <name type="ordered locus">SPA0610</name>
</gene>
<sequence>MLEARDLYCERDERTLFRGLSFTVDAGEWVQVTGGNGAGKTTLLRLLTGLARPDGGEVYWQGEPLRRVRDSFHRSLLWIGHQPGIKTRLTARENLHFFHPGDGARLPEALAQAGLAGFEDVPVARLSAGQQRRVALARLWLTRAALWVLDEPFTAIDVNGVARLTRRMAAHTAQGGMVILTTHQPLPGAADTVRRLALTGGEAGL</sequence>
<keyword id="KW-0067">ATP-binding</keyword>
<keyword id="KW-0997">Cell inner membrane</keyword>
<keyword id="KW-1003">Cell membrane</keyword>
<keyword id="KW-0201">Cytochrome c-type biogenesis</keyword>
<keyword id="KW-0472">Membrane</keyword>
<keyword id="KW-0547">Nucleotide-binding</keyword>
<keyword id="KW-1278">Translocase</keyword>
<keyword id="KW-0813">Transport</keyword>
<dbReference type="EC" id="7.6.2.5" evidence="1"/>
<dbReference type="EMBL" id="CP000026">
    <property type="protein sequence ID" value="AAV76611.1"/>
    <property type="molecule type" value="Genomic_DNA"/>
</dbReference>
<dbReference type="SMR" id="Q5PI55"/>
<dbReference type="KEGG" id="spt:SPA0610"/>
<dbReference type="HOGENOM" id="CLU_000604_1_2_6"/>
<dbReference type="Proteomes" id="UP000008185">
    <property type="component" value="Chromosome"/>
</dbReference>
<dbReference type="GO" id="GO:0005886">
    <property type="term" value="C:plasma membrane"/>
    <property type="evidence" value="ECO:0007669"/>
    <property type="project" value="UniProtKB-SubCell"/>
</dbReference>
<dbReference type="GO" id="GO:0015439">
    <property type="term" value="F:ABC-type heme transporter activity"/>
    <property type="evidence" value="ECO:0007669"/>
    <property type="project" value="UniProtKB-EC"/>
</dbReference>
<dbReference type="GO" id="GO:0005524">
    <property type="term" value="F:ATP binding"/>
    <property type="evidence" value="ECO:0007669"/>
    <property type="project" value="UniProtKB-KW"/>
</dbReference>
<dbReference type="GO" id="GO:0016887">
    <property type="term" value="F:ATP hydrolysis activity"/>
    <property type="evidence" value="ECO:0007669"/>
    <property type="project" value="InterPro"/>
</dbReference>
<dbReference type="GO" id="GO:0017004">
    <property type="term" value="P:cytochrome complex assembly"/>
    <property type="evidence" value="ECO:0007669"/>
    <property type="project" value="UniProtKB-KW"/>
</dbReference>
<dbReference type="CDD" id="cd03231">
    <property type="entry name" value="ABC_CcmA_heme_exporter"/>
    <property type="match status" value="1"/>
</dbReference>
<dbReference type="Gene3D" id="3.40.50.300">
    <property type="entry name" value="P-loop containing nucleotide triphosphate hydrolases"/>
    <property type="match status" value="1"/>
</dbReference>
<dbReference type="InterPro" id="IPR003593">
    <property type="entry name" value="AAA+_ATPase"/>
</dbReference>
<dbReference type="InterPro" id="IPR003439">
    <property type="entry name" value="ABC_transporter-like_ATP-bd"/>
</dbReference>
<dbReference type="InterPro" id="IPR017871">
    <property type="entry name" value="ABC_transporter-like_CS"/>
</dbReference>
<dbReference type="InterPro" id="IPR005895">
    <property type="entry name" value="ABC_transptr_haem_export_CcmA"/>
</dbReference>
<dbReference type="InterPro" id="IPR027417">
    <property type="entry name" value="P-loop_NTPase"/>
</dbReference>
<dbReference type="NCBIfam" id="TIGR01189">
    <property type="entry name" value="ccmA"/>
    <property type="match status" value="1"/>
</dbReference>
<dbReference type="NCBIfam" id="NF010061">
    <property type="entry name" value="PRK13538.1"/>
    <property type="match status" value="1"/>
</dbReference>
<dbReference type="PANTHER" id="PTHR43499">
    <property type="entry name" value="ABC TRANSPORTER I FAMILY MEMBER 1"/>
    <property type="match status" value="1"/>
</dbReference>
<dbReference type="PANTHER" id="PTHR43499:SF1">
    <property type="entry name" value="ABC TRANSPORTER I FAMILY MEMBER 1"/>
    <property type="match status" value="1"/>
</dbReference>
<dbReference type="Pfam" id="PF00005">
    <property type="entry name" value="ABC_tran"/>
    <property type="match status" value="1"/>
</dbReference>
<dbReference type="SMART" id="SM00382">
    <property type="entry name" value="AAA"/>
    <property type="match status" value="1"/>
</dbReference>
<dbReference type="SUPFAM" id="SSF52540">
    <property type="entry name" value="P-loop containing nucleoside triphosphate hydrolases"/>
    <property type="match status" value="1"/>
</dbReference>
<dbReference type="PROSITE" id="PS00211">
    <property type="entry name" value="ABC_TRANSPORTER_1"/>
    <property type="match status" value="1"/>
</dbReference>
<dbReference type="PROSITE" id="PS50893">
    <property type="entry name" value="ABC_TRANSPORTER_2"/>
    <property type="match status" value="1"/>
</dbReference>
<dbReference type="PROSITE" id="PS51243">
    <property type="entry name" value="CCMA"/>
    <property type="match status" value="1"/>
</dbReference>
<name>CCMA1_SALPA</name>
<feature type="chain" id="PRO_0000092209" description="Cytochrome c biogenesis ATP-binding export protein CcmA 1">
    <location>
        <begin position="1"/>
        <end position="205"/>
    </location>
</feature>
<feature type="domain" description="ABC transporter" evidence="1">
    <location>
        <begin position="2"/>
        <end position="205"/>
    </location>
</feature>
<feature type="binding site" evidence="1">
    <location>
        <begin position="34"/>
        <end position="41"/>
    </location>
    <ligand>
        <name>ATP</name>
        <dbReference type="ChEBI" id="CHEBI:30616"/>
    </ligand>
</feature>
<comment type="function">
    <text evidence="1">Part of the ABC transporter complex CcmAB involved in the biogenesis of c-type cytochromes; once thought to export heme, this seems not to be the case, but its exact role is uncertain. Responsible for energy coupling to the transport system.</text>
</comment>
<comment type="catalytic activity">
    <reaction evidence="1">
        <text>heme b(in) + ATP + H2O = heme b(out) + ADP + phosphate + H(+)</text>
        <dbReference type="Rhea" id="RHEA:19261"/>
        <dbReference type="ChEBI" id="CHEBI:15377"/>
        <dbReference type="ChEBI" id="CHEBI:15378"/>
        <dbReference type="ChEBI" id="CHEBI:30616"/>
        <dbReference type="ChEBI" id="CHEBI:43474"/>
        <dbReference type="ChEBI" id="CHEBI:60344"/>
        <dbReference type="ChEBI" id="CHEBI:456216"/>
        <dbReference type="EC" id="7.6.2.5"/>
    </reaction>
</comment>
<comment type="subunit">
    <text evidence="1">The complex is composed of two ATP-binding proteins (CcmA) and two transmembrane proteins (CcmB).</text>
</comment>
<comment type="subcellular location">
    <subcellularLocation>
        <location evidence="1">Cell inner membrane</location>
        <topology evidence="1">Peripheral membrane protein</topology>
    </subcellularLocation>
</comment>
<comment type="similarity">
    <text evidence="1">Belongs to the ABC transporter superfamily. CcmA exporter (TC 3.A.1.107) family.</text>
</comment>
<organism>
    <name type="scientific">Salmonella paratyphi A (strain ATCC 9150 / SARB42)</name>
    <dbReference type="NCBI Taxonomy" id="295319"/>
    <lineage>
        <taxon>Bacteria</taxon>
        <taxon>Pseudomonadati</taxon>
        <taxon>Pseudomonadota</taxon>
        <taxon>Gammaproteobacteria</taxon>
        <taxon>Enterobacterales</taxon>
        <taxon>Enterobacteriaceae</taxon>
        <taxon>Salmonella</taxon>
    </lineage>
</organism>
<proteinExistence type="inferred from homology"/>
<reference key="1">
    <citation type="journal article" date="2004" name="Nat. Genet.">
        <title>Comparison of genome degradation in Paratyphi A and Typhi, human-restricted serovars of Salmonella enterica that cause typhoid.</title>
        <authorList>
            <person name="McClelland M."/>
            <person name="Sanderson K.E."/>
            <person name="Clifton S.W."/>
            <person name="Latreille P."/>
            <person name="Porwollik S."/>
            <person name="Sabo A."/>
            <person name="Meyer R."/>
            <person name="Bieri T."/>
            <person name="Ozersky P."/>
            <person name="McLellan M."/>
            <person name="Harkins C.R."/>
            <person name="Wang C."/>
            <person name="Nguyen C."/>
            <person name="Berghoff A."/>
            <person name="Elliott G."/>
            <person name="Kohlberg S."/>
            <person name="Strong C."/>
            <person name="Du F."/>
            <person name="Carter J."/>
            <person name="Kremizki C."/>
            <person name="Layman D."/>
            <person name="Leonard S."/>
            <person name="Sun H."/>
            <person name="Fulton L."/>
            <person name="Nash W."/>
            <person name="Miner T."/>
            <person name="Minx P."/>
            <person name="Delehaunty K."/>
            <person name="Fronick C."/>
            <person name="Magrini V."/>
            <person name="Nhan M."/>
            <person name="Warren W."/>
            <person name="Florea L."/>
            <person name="Spieth J."/>
            <person name="Wilson R.K."/>
        </authorList>
    </citation>
    <scope>NUCLEOTIDE SEQUENCE [LARGE SCALE GENOMIC DNA]</scope>
    <source>
        <strain>ATCC 9150 / SARB42</strain>
    </source>
</reference>
<accession>Q5PI55</accession>
<protein>
    <recommendedName>
        <fullName evidence="1">Cytochrome c biogenesis ATP-binding export protein CcmA 1</fullName>
        <ecNumber evidence="1">7.6.2.5</ecNumber>
    </recommendedName>
    <alternativeName>
        <fullName evidence="1">Heme exporter protein A 1</fullName>
    </alternativeName>
</protein>
<evidence type="ECO:0000255" key="1">
    <source>
        <dbReference type="HAMAP-Rule" id="MF_01707"/>
    </source>
</evidence>